<protein>
    <recommendedName>
        <fullName>CASP-like protein SELMODRAFT_406854</fullName>
    </recommendedName>
</protein>
<comment type="subunit">
    <text evidence="1">Homodimer and heterodimers.</text>
</comment>
<comment type="subcellular location">
    <subcellularLocation>
        <location evidence="1">Cell membrane</location>
        <topology evidence="1">Multi-pass membrane protein</topology>
    </subcellularLocation>
</comment>
<comment type="similarity">
    <text evidence="3">Belongs to the Casparian strip membrane proteins (CASP) family.</text>
</comment>
<accession>D8R354</accession>
<evidence type="ECO:0000250" key="1"/>
<evidence type="ECO:0000255" key="2"/>
<evidence type="ECO:0000305" key="3"/>
<keyword id="KW-1003">Cell membrane</keyword>
<keyword id="KW-0472">Membrane</keyword>
<keyword id="KW-1185">Reference proteome</keyword>
<keyword id="KW-0812">Transmembrane</keyword>
<keyword id="KW-1133">Transmembrane helix</keyword>
<dbReference type="EMBL" id="GL377571">
    <property type="protein sequence ID" value="EFJ32884.1"/>
    <property type="molecule type" value="Genomic_DNA"/>
</dbReference>
<dbReference type="RefSeq" id="XP_002965464.1">
    <property type="nucleotide sequence ID" value="XM_002965418.1"/>
</dbReference>
<dbReference type="EnsemblPlants" id="EFJ32884">
    <property type="protein sequence ID" value="EFJ32884"/>
    <property type="gene ID" value="SELMODRAFT_406854"/>
</dbReference>
<dbReference type="Gramene" id="EFJ32884">
    <property type="protein sequence ID" value="EFJ32884"/>
    <property type="gene ID" value="SELMODRAFT_406854"/>
</dbReference>
<dbReference type="KEGG" id="smo:SELMODRAFT_406854"/>
<dbReference type="HOGENOM" id="CLU_1868681_0_0_1"/>
<dbReference type="InParanoid" id="D8R354"/>
<dbReference type="Proteomes" id="UP000001514">
    <property type="component" value="Unassembled WGS sequence"/>
</dbReference>
<dbReference type="GO" id="GO:0005886">
    <property type="term" value="C:plasma membrane"/>
    <property type="evidence" value="ECO:0007669"/>
    <property type="project" value="UniProtKB-SubCell"/>
</dbReference>
<dbReference type="InterPro" id="IPR006702">
    <property type="entry name" value="CASP_dom"/>
</dbReference>
<dbReference type="PANTHER" id="PTHR33573:SF30">
    <property type="entry name" value="CASP-LIKE PROTEIN 2C1-RELATED"/>
    <property type="match status" value="1"/>
</dbReference>
<dbReference type="PANTHER" id="PTHR33573">
    <property type="entry name" value="CASP-LIKE PROTEIN 4A4"/>
    <property type="match status" value="1"/>
</dbReference>
<dbReference type="Pfam" id="PF04535">
    <property type="entry name" value="CASP_dom"/>
    <property type="match status" value="1"/>
</dbReference>
<reference key="1">
    <citation type="journal article" date="2011" name="Science">
        <title>The Selaginella genome identifies genetic changes associated with the evolution of vascular plants.</title>
        <authorList>
            <person name="Banks J.A."/>
            <person name="Nishiyama T."/>
            <person name="Hasebe M."/>
            <person name="Bowman J.L."/>
            <person name="Gribskov M."/>
            <person name="dePamphilis C."/>
            <person name="Albert V.A."/>
            <person name="Aono N."/>
            <person name="Aoyama T."/>
            <person name="Ambrose B.A."/>
            <person name="Ashton N.W."/>
            <person name="Axtell M.J."/>
            <person name="Barker E."/>
            <person name="Barker M.S."/>
            <person name="Bennetzen J.L."/>
            <person name="Bonawitz N.D."/>
            <person name="Chapple C."/>
            <person name="Cheng C."/>
            <person name="Correa L.G."/>
            <person name="Dacre M."/>
            <person name="DeBarry J."/>
            <person name="Dreyer I."/>
            <person name="Elias M."/>
            <person name="Engstrom E.M."/>
            <person name="Estelle M."/>
            <person name="Feng L."/>
            <person name="Finet C."/>
            <person name="Floyd S.K."/>
            <person name="Frommer W.B."/>
            <person name="Fujita T."/>
            <person name="Gramzow L."/>
            <person name="Gutensohn M."/>
            <person name="Harholt J."/>
            <person name="Hattori M."/>
            <person name="Heyl A."/>
            <person name="Hirai T."/>
            <person name="Hiwatashi Y."/>
            <person name="Ishikawa M."/>
            <person name="Iwata M."/>
            <person name="Karol K.G."/>
            <person name="Koehler B."/>
            <person name="Kolukisaoglu U."/>
            <person name="Kubo M."/>
            <person name="Kurata T."/>
            <person name="Lalonde S."/>
            <person name="Li K."/>
            <person name="Li Y."/>
            <person name="Litt A."/>
            <person name="Lyons E."/>
            <person name="Manning G."/>
            <person name="Maruyama T."/>
            <person name="Michael T.P."/>
            <person name="Mikami K."/>
            <person name="Miyazaki S."/>
            <person name="Morinaga S."/>
            <person name="Murata T."/>
            <person name="Mueller-Roeber B."/>
            <person name="Nelson D.R."/>
            <person name="Obara M."/>
            <person name="Oguri Y."/>
            <person name="Olmstead R.G."/>
            <person name="Onodera N."/>
            <person name="Petersen B.L."/>
            <person name="Pils B."/>
            <person name="Prigge M."/>
            <person name="Rensing S.A."/>
            <person name="Riano-Pachon D.M."/>
            <person name="Roberts A.W."/>
            <person name="Sato Y."/>
            <person name="Scheller H.V."/>
            <person name="Schulz B."/>
            <person name="Schulz C."/>
            <person name="Shakirov E.V."/>
            <person name="Shibagaki N."/>
            <person name="Shinohara N."/>
            <person name="Shippen D.E."/>
            <person name="Soerensen I."/>
            <person name="Sotooka R."/>
            <person name="Sugimoto N."/>
            <person name="Sugita M."/>
            <person name="Sumikawa N."/>
            <person name="Tanurdzic M."/>
            <person name="Theissen G."/>
            <person name="Ulvskov P."/>
            <person name="Wakazuki S."/>
            <person name="Weng J.K."/>
            <person name="Willats W.W."/>
            <person name="Wipf D."/>
            <person name="Wolf P.G."/>
            <person name="Yang L."/>
            <person name="Zimmer A.D."/>
            <person name="Zhu Q."/>
            <person name="Mitros T."/>
            <person name="Hellsten U."/>
            <person name="Loque D."/>
            <person name="Otillar R."/>
            <person name="Salamov A."/>
            <person name="Schmutz J."/>
            <person name="Shapiro H."/>
            <person name="Lindquist E."/>
            <person name="Lucas S."/>
            <person name="Rokhsar D."/>
            <person name="Grigoriev I.V."/>
        </authorList>
    </citation>
    <scope>NUCLEOTIDE SEQUENCE [LARGE SCALE GENOMIC DNA]</scope>
</reference>
<feature type="chain" id="PRO_0000418677" description="CASP-like protein SELMODRAFT_406854">
    <location>
        <begin position="1"/>
        <end position="145"/>
    </location>
</feature>
<feature type="topological domain" description="Cytoplasmic" evidence="2">
    <location>
        <begin position="1"/>
        <end position="31"/>
    </location>
</feature>
<feature type="transmembrane region" description="Helical" evidence="2">
    <location>
        <begin position="32"/>
        <end position="52"/>
    </location>
</feature>
<feature type="topological domain" description="Extracellular" evidence="2">
    <location>
        <begin position="53"/>
        <end position="75"/>
    </location>
</feature>
<feature type="transmembrane region" description="Helical" evidence="2">
    <location>
        <begin position="76"/>
        <end position="96"/>
    </location>
</feature>
<feature type="topological domain" description="Cytoplasmic" evidence="2">
    <location>
        <begin position="97"/>
        <end position="112"/>
    </location>
</feature>
<feature type="transmembrane region" description="Helical" evidence="2">
    <location>
        <begin position="113"/>
        <end position="133"/>
    </location>
</feature>
<feature type="topological domain" description="Extracellular" evidence="2">
    <location>
        <begin position="134"/>
        <end position="145"/>
    </location>
</feature>
<name>CSPLC_SELML</name>
<proteinExistence type="inferred from homology"/>
<organism>
    <name type="scientific">Selaginella moellendorffii</name>
    <name type="common">Spikemoss</name>
    <dbReference type="NCBI Taxonomy" id="88036"/>
    <lineage>
        <taxon>Eukaryota</taxon>
        <taxon>Viridiplantae</taxon>
        <taxon>Streptophyta</taxon>
        <taxon>Embryophyta</taxon>
        <taxon>Tracheophyta</taxon>
        <taxon>Lycopodiopsida</taxon>
        <taxon>Selaginellales</taxon>
        <taxon>Selaginellaceae</taxon>
        <taxon>Selaginella</taxon>
    </lineage>
</organism>
<sequence>MGVASQSSVANEAGAAPEASIQQTLRGFSSPTSLLLRIATAVLCTLTLAFLVTSKERKEIASIDIVAIWSNSKALIFLAVVSGICLGYSLLHAAVFLVMLSGNRKPLARKKALDWMVFLADQVFFKIFCWFSIRVSSRRSKAGFV</sequence>
<gene>
    <name type="ORF">SELMODRAFT_406854</name>
</gene>